<accession>P45215</accession>
<name>Y1459_HAEIN</name>
<keyword id="KW-0238">DNA-binding</keyword>
<keyword id="KW-1185">Reference proteome</keyword>
<keyword id="KW-0731">Sigma factor</keyword>
<keyword id="KW-0804">Transcription</keyword>
<keyword id="KW-0805">Transcription regulation</keyword>
<protein>
    <recommendedName>
        <fullName>Probable RNA polymerase sigma factor HI_1459</fullName>
    </recommendedName>
</protein>
<evidence type="ECO:0000250" key="1"/>
<evidence type="ECO:0000305" key="2"/>
<proteinExistence type="inferred from homology"/>
<dbReference type="EMBL" id="L42023">
    <property type="protein sequence ID" value="AAC23107.1"/>
    <property type="molecule type" value="Genomic_DNA"/>
</dbReference>
<dbReference type="PIR" id="G64124">
    <property type="entry name" value="G64124"/>
</dbReference>
<dbReference type="RefSeq" id="NP_439610.2">
    <property type="nucleotide sequence ID" value="NC_000907.1"/>
</dbReference>
<dbReference type="SMR" id="P45215"/>
<dbReference type="STRING" id="71421.HI_1459"/>
<dbReference type="EnsemblBacteria" id="AAC23107">
    <property type="protein sequence ID" value="AAC23107"/>
    <property type="gene ID" value="HI_1459"/>
</dbReference>
<dbReference type="KEGG" id="hin:HI_1459"/>
<dbReference type="PATRIC" id="fig|71421.8.peg.1522"/>
<dbReference type="eggNOG" id="COG1595">
    <property type="taxonomic scope" value="Bacteria"/>
</dbReference>
<dbReference type="HOGENOM" id="CLU_047691_2_0_6"/>
<dbReference type="OrthoDB" id="9782108at2"/>
<dbReference type="PhylomeDB" id="P45215"/>
<dbReference type="Proteomes" id="UP000000579">
    <property type="component" value="Chromosome"/>
</dbReference>
<dbReference type="GO" id="GO:0003677">
    <property type="term" value="F:DNA binding"/>
    <property type="evidence" value="ECO:0007669"/>
    <property type="project" value="UniProtKB-KW"/>
</dbReference>
<dbReference type="GO" id="GO:0016987">
    <property type="term" value="F:sigma factor activity"/>
    <property type="evidence" value="ECO:0000318"/>
    <property type="project" value="GO_Central"/>
</dbReference>
<dbReference type="GO" id="GO:0006352">
    <property type="term" value="P:DNA-templated transcription initiation"/>
    <property type="evidence" value="ECO:0007669"/>
    <property type="project" value="InterPro"/>
</dbReference>
<dbReference type="GO" id="GO:0006355">
    <property type="term" value="P:regulation of DNA-templated transcription"/>
    <property type="evidence" value="ECO:0000318"/>
    <property type="project" value="GO_Central"/>
</dbReference>
<dbReference type="CDD" id="cd06171">
    <property type="entry name" value="Sigma70_r4"/>
    <property type="match status" value="1"/>
</dbReference>
<dbReference type="Gene3D" id="1.10.1740.10">
    <property type="match status" value="1"/>
</dbReference>
<dbReference type="Gene3D" id="1.10.10.10">
    <property type="entry name" value="Winged helix-like DNA-binding domain superfamily/Winged helix DNA-binding domain"/>
    <property type="match status" value="1"/>
</dbReference>
<dbReference type="InterPro" id="IPR014289">
    <property type="entry name" value="RNA_pol_sigma-24-rel"/>
</dbReference>
<dbReference type="InterPro" id="IPR039425">
    <property type="entry name" value="RNA_pol_sigma-70-like"/>
</dbReference>
<dbReference type="InterPro" id="IPR014284">
    <property type="entry name" value="RNA_pol_sigma-70_dom"/>
</dbReference>
<dbReference type="InterPro" id="IPR000838">
    <property type="entry name" value="RNA_pol_sigma70_ECF_CS"/>
</dbReference>
<dbReference type="InterPro" id="IPR007627">
    <property type="entry name" value="RNA_pol_sigma70_r2"/>
</dbReference>
<dbReference type="InterPro" id="IPR013249">
    <property type="entry name" value="RNA_pol_sigma70_r4_t2"/>
</dbReference>
<dbReference type="InterPro" id="IPR013325">
    <property type="entry name" value="RNA_pol_sigma_r2"/>
</dbReference>
<dbReference type="InterPro" id="IPR013324">
    <property type="entry name" value="RNA_pol_sigma_r3/r4-like"/>
</dbReference>
<dbReference type="InterPro" id="IPR036388">
    <property type="entry name" value="WH-like_DNA-bd_sf"/>
</dbReference>
<dbReference type="NCBIfam" id="NF009182">
    <property type="entry name" value="PRK12530.1"/>
    <property type="match status" value="1"/>
</dbReference>
<dbReference type="NCBIfam" id="TIGR02943">
    <property type="entry name" value="Sig70_famx1"/>
    <property type="match status" value="1"/>
</dbReference>
<dbReference type="NCBIfam" id="TIGR02937">
    <property type="entry name" value="sigma70-ECF"/>
    <property type="match status" value="1"/>
</dbReference>
<dbReference type="PANTHER" id="PTHR43133">
    <property type="entry name" value="RNA POLYMERASE ECF-TYPE SIGMA FACTO"/>
    <property type="match status" value="1"/>
</dbReference>
<dbReference type="PANTHER" id="PTHR43133:SF8">
    <property type="entry name" value="RNA POLYMERASE SIGMA FACTOR HI_1459-RELATED"/>
    <property type="match status" value="1"/>
</dbReference>
<dbReference type="Pfam" id="PF04542">
    <property type="entry name" value="Sigma70_r2"/>
    <property type="match status" value="1"/>
</dbReference>
<dbReference type="Pfam" id="PF08281">
    <property type="entry name" value="Sigma70_r4_2"/>
    <property type="match status" value="1"/>
</dbReference>
<dbReference type="SUPFAM" id="SSF88946">
    <property type="entry name" value="Sigma2 domain of RNA polymerase sigma factors"/>
    <property type="match status" value="1"/>
</dbReference>
<dbReference type="SUPFAM" id="SSF88659">
    <property type="entry name" value="Sigma3 and sigma4 domains of RNA polymerase sigma factors"/>
    <property type="match status" value="1"/>
</dbReference>
<dbReference type="PROSITE" id="PS01063">
    <property type="entry name" value="SIGMA70_ECF"/>
    <property type="match status" value="1"/>
</dbReference>
<reference key="1">
    <citation type="journal article" date="1995" name="Science">
        <title>Whole-genome random sequencing and assembly of Haemophilus influenzae Rd.</title>
        <authorList>
            <person name="Fleischmann R.D."/>
            <person name="Adams M.D."/>
            <person name="White O."/>
            <person name="Clayton R.A."/>
            <person name="Kirkness E.F."/>
            <person name="Kerlavage A.R."/>
            <person name="Bult C.J."/>
            <person name="Tomb J.-F."/>
            <person name="Dougherty B.A."/>
            <person name="Merrick J.M."/>
            <person name="McKenney K."/>
            <person name="Sutton G.G."/>
            <person name="FitzHugh W."/>
            <person name="Fields C.A."/>
            <person name="Gocayne J.D."/>
            <person name="Scott J.D."/>
            <person name="Shirley R."/>
            <person name="Liu L.-I."/>
            <person name="Glodek A."/>
            <person name="Kelley J.M."/>
            <person name="Weidman J.F."/>
            <person name="Phillips C.A."/>
            <person name="Spriggs T."/>
            <person name="Hedblom E."/>
            <person name="Cotton M.D."/>
            <person name="Utterback T.R."/>
            <person name="Hanna M.C."/>
            <person name="Nguyen D.T."/>
            <person name="Saudek D.M."/>
            <person name="Brandon R.C."/>
            <person name="Fine L.D."/>
            <person name="Fritchman J.L."/>
            <person name="Fuhrmann J.L."/>
            <person name="Geoghagen N.S.M."/>
            <person name="Gnehm C.L."/>
            <person name="McDonald L.A."/>
            <person name="Small K.V."/>
            <person name="Fraser C.M."/>
            <person name="Smith H.O."/>
            <person name="Venter J.C."/>
        </authorList>
    </citation>
    <scope>NUCLEOTIDE SEQUENCE [LARGE SCALE GENOMIC DNA]</scope>
    <source>
        <strain>ATCC 51907 / DSM 11121 / KW20 / Rd</strain>
    </source>
</reference>
<gene>
    <name type="ordered locus">HI_1459</name>
</gene>
<organism>
    <name type="scientific">Haemophilus influenzae (strain ATCC 51907 / DSM 11121 / KW20 / Rd)</name>
    <dbReference type="NCBI Taxonomy" id="71421"/>
    <lineage>
        <taxon>Bacteria</taxon>
        <taxon>Pseudomonadati</taxon>
        <taxon>Pseudomonadota</taxon>
        <taxon>Gammaproteobacteria</taxon>
        <taxon>Pasteurellales</taxon>
        <taxon>Pasteurellaceae</taxon>
        <taxon>Haemophilus</taxon>
    </lineage>
</organism>
<comment type="similarity">
    <text evidence="2">Belongs to the sigma-70 factor family. ECF subfamily.</text>
</comment>
<sequence>MSFISYISFKGIKMNVISDLELQQIRTQMLTFAQLQVNQADLAEDLVQEAFLSAFKNLANFKRQSAFKTWIFAILKNKIIDYLRQKGRFVLESELEDENTNNSFFDEKGHWKPEYHPSELQGEEETVYSDEFWLIFETCLNCLPAKQAKIFMMREFLELSSEEICQETHLTSSNLHTTLYRARLQLQNCLSKKL</sequence>
<feature type="chain" id="PRO_0000094020" description="Probable RNA polymerase sigma factor HI_1459">
    <location>
        <begin position="1"/>
        <end position="194"/>
    </location>
</feature>
<feature type="DNA-binding region" description="H-T-H motif" evidence="1">
    <location>
        <begin position="161"/>
        <end position="180"/>
    </location>
</feature>
<feature type="short sequence motif" description="Polymerase core binding">
    <location>
        <begin position="45"/>
        <end position="58"/>
    </location>
</feature>